<sequence>VGFKAGVKDYKLTYYTPDYETKDTDILAAFRVTPQPGVPPEEAGAAVAAESSTGTWTTVWTDGLTSLDRYKGRCYHIEPVPGEESQFIAYVAYPLDLFEEGSVTNMFTSIVGNVFGFKALRALRLEDLRIPTAYVKTFQGPPHGIQVERDKLNKYGRPLLGCTIKPKLGLSAKNYGRAVYECLRGGLDFTKDDENVNSQPFMRWRDRFLFCAEAIYKSQAETGEIKGHYLNATAGTCEDMMKRAVFARELGVPIVMHDYLTGGFTANTTLAHYCRDNGLLLHIHRAMHAVIDRQKNHGMHFRVLAKALRMSGGDHIHAGTVVGKLEGEREITLGFVDLLRDDFIEKDRSRGIYFTQDWVSLPGVLPVASGGIHVWHMPALTEIFGDDSVLQFGGGTLGHPWGNAPGAVANRVALEACVQARNEGRDLAREGNDIIREACKWSPELAAACEVWKEIKFEFEAMDTL</sequence>
<gene>
    <name evidence="1" type="primary">rbcL</name>
</gene>
<proteinExistence type="inferred from homology"/>
<keyword id="KW-0113">Calvin cycle</keyword>
<keyword id="KW-0120">Carbon dioxide fixation</keyword>
<keyword id="KW-0150">Chloroplast</keyword>
<keyword id="KW-1015">Disulfide bond</keyword>
<keyword id="KW-0456">Lyase</keyword>
<keyword id="KW-0460">Magnesium</keyword>
<keyword id="KW-0479">Metal-binding</keyword>
<keyword id="KW-0488">Methylation</keyword>
<keyword id="KW-0503">Monooxygenase</keyword>
<keyword id="KW-0560">Oxidoreductase</keyword>
<keyword id="KW-0601">Photorespiration</keyword>
<keyword id="KW-0602">Photosynthesis</keyword>
<keyword id="KW-0934">Plastid</keyword>
<dbReference type="EC" id="4.1.1.39" evidence="1"/>
<dbReference type="EMBL" id="U06805">
    <property type="protein sequence ID" value="AAA21223.1"/>
    <property type="molecule type" value="Genomic_DNA"/>
</dbReference>
<dbReference type="SMR" id="P48703"/>
<dbReference type="GO" id="GO:0009507">
    <property type="term" value="C:chloroplast"/>
    <property type="evidence" value="ECO:0007669"/>
    <property type="project" value="UniProtKB-SubCell"/>
</dbReference>
<dbReference type="GO" id="GO:0000287">
    <property type="term" value="F:magnesium ion binding"/>
    <property type="evidence" value="ECO:0007669"/>
    <property type="project" value="InterPro"/>
</dbReference>
<dbReference type="GO" id="GO:0004497">
    <property type="term" value="F:monooxygenase activity"/>
    <property type="evidence" value="ECO:0007669"/>
    <property type="project" value="UniProtKB-KW"/>
</dbReference>
<dbReference type="GO" id="GO:0016984">
    <property type="term" value="F:ribulose-bisphosphate carboxylase activity"/>
    <property type="evidence" value="ECO:0007669"/>
    <property type="project" value="UniProtKB-EC"/>
</dbReference>
<dbReference type="GO" id="GO:0009853">
    <property type="term" value="P:photorespiration"/>
    <property type="evidence" value="ECO:0007669"/>
    <property type="project" value="UniProtKB-KW"/>
</dbReference>
<dbReference type="GO" id="GO:0019253">
    <property type="term" value="P:reductive pentose-phosphate cycle"/>
    <property type="evidence" value="ECO:0007669"/>
    <property type="project" value="UniProtKB-KW"/>
</dbReference>
<dbReference type="CDD" id="cd08212">
    <property type="entry name" value="RuBisCO_large_I"/>
    <property type="match status" value="1"/>
</dbReference>
<dbReference type="FunFam" id="3.20.20.110:FF:000001">
    <property type="entry name" value="Ribulose bisphosphate carboxylase large chain"/>
    <property type="match status" value="1"/>
</dbReference>
<dbReference type="FunFam" id="3.30.70.150:FF:000001">
    <property type="entry name" value="Ribulose bisphosphate carboxylase large chain"/>
    <property type="match status" value="1"/>
</dbReference>
<dbReference type="Gene3D" id="3.20.20.110">
    <property type="entry name" value="Ribulose bisphosphate carboxylase, large subunit, C-terminal domain"/>
    <property type="match status" value="1"/>
</dbReference>
<dbReference type="Gene3D" id="3.30.70.150">
    <property type="entry name" value="RuBisCO large subunit, N-terminal domain"/>
    <property type="match status" value="1"/>
</dbReference>
<dbReference type="HAMAP" id="MF_01338">
    <property type="entry name" value="RuBisCO_L_type1"/>
    <property type="match status" value="1"/>
</dbReference>
<dbReference type="InterPro" id="IPR033966">
    <property type="entry name" value="RuBisCO"/>
</dbReference>
<dbReference type="InterPro" id="IPR020878">
    <property type="entry name" value="RuBisCo_large_chain_AS"/>
</dbReference>
<dbReference type="InterPro" id="IPR000685">
    <property type="entry name" value="RuBisCO_lsu_C"/>
</dbReference>
<dbReference type="InterPro" id="IPR036376">
    <property type="entry name" value="RuBisCO_lsu_C_sf"/>
</dbReference>
<dbReference type="InterPro" id="IPR017443">
    <property type="entry name" value="RuBisCO_lsu_fd_N"/>
</dbReference>
<dbReference type="InterPro" id="IPR036422">
    <property type="entry name" value="RuBisCO_lsu_N_sf"/>
</dbReference>
<dbReference type="InterPro" id="IPR020888">
    <property type="entry name" value="RuBisCO_lsuI"/>
</dbReference>
<dbReference type="NCBIfam" id="NF003252">
    <property type="entry name" value="PRK04208.1"/>
    <property type="match status" value="1"/>
</dbReference>
<dbReference type="PANTHER" id="PTHR42704">
    <property type="entry name" value="RIBULOSE BISPHOSPHATE CARBOXYLASE"/>
    <property type="match status" value="1"/>
</dbReference>
<dbReference type="PANTHER" id="PTHR42704:SF15">
    <property type="entry name" value="RIBULOSE BISPHOSPHATE CARBOXYLASE LARGE CHAIN"/>
    <property type="match status" value="1"/>
</dbReference>
<dbReference type="Pfam" id="PF00016">
    <property type="entry name" value="RuBisCO_large"/>
    <property type="match status" value="1"/>
</dbReference>
<dbReference type="Pfam" id="PF02788">
    <property type="entry name" value="RuBisCO_large_N"/>
    <property type="match status" value="1"/>
</dbReference>
<dbReference type="SFLD" id="SFLDG01052">
    <property type="entry name" value="RuBisCO"/>
    <property type="match status" value="1"/>
</dbReference>
<dbReference type="SFLD" id="SFLDS00014">
    <property type="entry name" value="RuBisCO"/>
    <property type="match status" value="1"/>
</dbReference>
<dbReference type="SFLD" id="SFLDG00301">
    <property type="entry name" value="RuBisCO-like_proteins"/>
    <property type="match status" value="1"/>
</dbReference>
<dbReference type="SUPFAM" id="SSF51649">
    <property type="entry name" value="RuBisCo, C-terminal domain"/>
    <property type="match status" value="1"/>
</dbReference>
<dbReference type="SUPFAM" id="SSF54966">
    <property type="entry name" value="RuBisCO, large subunit, small (N-terminal) domain"/>
    <property type="match status" value="1"/>
</dbReference>
<dbReference type="PROSITE" id="PS00157">
    <property type="entry name" value="RUBISCO_LARGE"/>
    <property type="match status" value="1"/>
</dbReference>
<name>RBL_FRAAN</name>
<comment type="function">
    <text evidence="1">RuBisCO catalyzes two reactions: the carboxylation of D-ribulose 1,5-bisphosphate, the primary event in carbon dioxide fixation, as well as the oxidative fragmentation of the pentose substrate in the photorespiration process. Both reactions occur simultaneously and in competition at the same active site.</text>
</comment>
<comment type="catalytic activity">
    <reaction evidence="1">
        <text>2 (2R)-3-phosphoglycerate + 2 H(+) = D-ribulose 1,5-bisphosphate + CO2 + H2O</text>
        <dbReference type="Rhea" id="RHEA:23124"/>
        <dbReference type="ChEBI" id="CHEBI:15377"/>
        <dbReference type="ChEBI" id="CHEBI:15378"/>
        <dbReference type="ChEBI" id="CHEBI:16526"/>
        <dbReference type="ChEBI" id="CHEBI:57870"/>
        <dbReference type="ChEBI" id="CHEBI:58272"/>
        <dbReference type="EC" id="4.1.1.39"/>
    </reaction>
</comment>
<comment type="catalytic activity">
    <reaction evidence="1">
        <text>D-ribulose 1,5-bisphosphate + O2 = 2-phosphoglycolate + (2R)-3-phosphoglycerate + 2 H(+)</text>
        <dbReference type="Rhea" id="RHEA:36631"/>
        <dbReference type="ChEBI" id="CHEBI:15378"/>
        <dbReference type="ChEBI" id="CHEBI:15379"/>
        <dbReference type="ChEBI" id="CHEBI:57870"/>
        <dbReference type="ChEBI" id="CHEBI:58033"/>
        <dbReference type="ChEBI" id="CHEBI:58272"/>
    </reaction>
</comment>
<comment type="cofactor">
    <cofactor evidence="1">
        <name>Mg(2+)</name>
        <dbReference type="ChEBI" id="CHEBI:18420"/>
    </cofactor>
    <text evidence="1">Binds 1 Mg(2+) ion per subunit.</text>
</comment>
<comment type="subunit">
    <text evidence="1">Heterohexadecamer of 8 large chains and 8 small chains; disulfide-linked. The disulfide link is formed within the large subunit homodimers.</text>
</comment>
<comment type="subcellular location">
    <subcellularLocation>
        <location>Plastid</location>
        <location>Chloroplast</location>
    </subcellularLocation>
</comment>
<comment type="PTM">
    <text evidence="1">The disulfide bond which can form in the large chain dimeric partners within the hexadecamer appears to be associated with oxidative stress and protein turnover.</text>
</comment>
<comment type="miscellaneous">
    <text evidence="1">The basic functional RuBisCO is composed of a large chain homodimer in a 'head-to-tail' conformation. In form I RuBisCO this homodimer is arranged in a barrel-like tetramer with the small subunits forming a tetrameric 'cap' on each end of the 'barrel'.</text>
</comment>
<comment type="similarity">
    <text evidence="1">Belongs to the RuBisCO large chain family. Type I subfamily.</text>
</comment>
<accession>P48703</accession>
<feature type="chain" id="PRO_0000062475" description="Ribulose bisphosphate carboxylase large chain">
    <location>
        <begin position="1" status="less than"/>
        <end position="465"/>
    </location>
</feature>
<feature type="active site" description="Proton acceptor" evidence="1">
    <location>
        <position position="165"/>
    </location>
</feature>
<feature type="active site" description="Proton acceptor" evidence="1">
    <location>
        <position position="284"/>
    </location>
</feature>
<feature type="binding site" description="in homodimeric partner" evidence="1">
    <location>
        <position position="113"/>
    </location>
    <ligand>
        <name>substrate</name>
    </ligand>
</feature>
<feature type="binding site" evidence="1">
    <location>
        <position position="163"/>
    </location>
    <ligand>
        <name>substrate</name>
    </ligand>
</feature>
<feature type="binding site" evidence="1">
    <location>
        <position position="167"/>
    </location>
    <ligand>
        <name>substrate</name>
    </ligand>
</feature>
<feature type="binding site" description="via carbamate group" evidence="1">
    <location>
        <position position="191"/>
    </location>
    <ligand>
        <name>Mg(2+)</name>
        <dbReference type="ChEBI" id="CHEBI:18420"/>
    </ligand>
</feature>
<feature type="binding site" evidence="1">
    <location>
        <position position="193"/>
    </location>
    <ligand>
        <name>Mg(2+)</name>
        <dbReference type="ChEBI" id="CHEBI:18420"/>
    </ligand>
</feature>
<feature type="binding site" evidence="1">
    <location>
        <position position="194"/>
    </location>
    <ligand>
        <name>Mg(2+)</name>
        <dbReference type="ChEBI" id="CHEBI:18420"/>
    </ligand>
</feature>
<feature type="binding site" evidence="1">
    <location>
        <position position="285"/>
    </location>
    <ligand>
        <name>substrate</name>
    </ligand>
</feature>
<feature type="binding site" evidence="1">
    <location>
        <position position="317"/>
    </location>
    <ligand>
        <name>substrate</name>
    </ligand>
</feature>
<feature type="binding site" evidence="1">
    <location>
        <position position="369"/>
    </location>
    <ligand>
        <name>substrate</name>
    </ligand>
</feature>
<feature type="site" description="Transition state stabilizer" evidence="1">
    <location>
        <position position="324"/>
    </location>
</feature>
<feature type="modified residue" description="N6,N6,N6-trimethyllysine" evidence="1">
    <location>
        <position position="4"/>
    </location>
</feature>
<feature type="modified residue" description="N6-carboxylysine" evidence="1">
    <location>
        <position position="191"/>
    </location>
</feature>
<feature type="disulfide bond" description="Interchain; in linked form" evidence="1">
    <location>
        <position position="237"/>
    </location>
</feature>
<feature type="non-terminal residue">
    <location>
        <position position="1"/>
    </location>
</feature>
<reference key="1">
    <citation type="journal article" date="1994" name="Am. J. Bot.">
        <title>Systematic and evolutionary implications of rbcL sequence variation in Rosaceae.</title>
        <authorList>
            <person name="Morgan D.R."/>
            <person name="Soltis D.E."/>
            <person name="Robertson K.R."/>
        </authorList>
    </citation>
    <scope>NUCLEOTIDE SEQUENCE [GENOMIC DNA]</scope>
    <source>
        <tissue>Leaf</tissue>
    </source>
</reference>
<evidence type="ECO:0000255" key="1">
    <source>
        <dbReference type="HAMAP-Rule" id="MF_01338"/>
    </source>
</evidence>
<protein>
    <recommendedName>
        <fullName evidence="1">Ribulose bisphosphate carboxylase large chain</fullName>
        <shortName evidence="1">RuBisCO large subunit</shortName>
        <ecNumber evidence="1">4.1.1.39</ecNumber>
    </recommendedName>
</protein>
<organism>
    <name type="scientific">Fragaria ananassa</name>
    <name type="common">Strawberry</name>
    <name type="synonym">Fragaria chiloensis x Fragaria virginiana</name>
    <dbReference type="NCBI Taxonomy" id="3747"/>
    <lineage>
        <taxon>Eukaryota</taxon>
        <taxon>Viridiplantae</taxon>
        <taxon>Streptophyta</taxon>
        <taxon>Embryophyta</taxon>
        <taxon>Tracheophyta</taxon>
        <taxon>Spermatophyta</taxon>
        <taxon>Magnoliopsida</taxon>
        <taxon>eudicotyledons</taxon>
        <taxon>Gunneridae</taxon>
        <taxon>Pentapetalae</taxon>
        <taxon>rosids</taxon>
        <taxon>fabids</taxon>
        <taxon>Rosales</taxon>
        <taxon>Rosaceae</taxon>
        <taxon>Rosoideae</taxon>
        <taxon>Potentilleae</taxon>
        <taxon>Fragariinae</taxon>
        <taxon>Fragaria</taxon>
    </lineage>
</organism>
<geneLocation type="chloroplast"/>